<sequence length="480" mass="53117">MVKICCIGAGYVGGPTMAVIALKCPSVEVAVVDISVPRINAWNSDQLPIYEPGLDDVVKQCRGKNLFFSTDVEKHVREADIVFVSVNTPTKTRGLGAGKAADLTYWESAARMIADVSVSDKIVVEKSTVPVKTAEAIEKILTHNSKGIKFQILSNPEFLAEGTAIEDLFMPDRVLIGGRETTEGFAAVKALKDIYAQWVPEERILTTNLWSAELSKLAANAFLAQRISSVNAMSALCEATGANVSEVSYAVGKDSRIGPKFLNSSVGFGGSCFQKDILNLVYICECNGLPEVAEYWKQVIKINDYQKTRFVNRIVSSMFNTVSNKKIAVLGFAFKKDTGDTRETPAIDVCKGLLGDKARLSIYDPQVTEEQIQRDLTMNKFDWDHPLHLQPMSPTTVKQVSVAWDAYTATKDAHGICILTEWDEFKKLDFQRIFENMQKPAFVFDGRNVVDADKLREIGFIVYSIGKPLDQWLKDMPALA</sequence>
<name>UGDH3_ARATH</name>
<accession>Q9LF33</accession>
<organism>
    <name type="scientific">Arabidopsis thaliana</name>
    <name type="common">Mouse-ear cress</name>
    <dbReference type="NCBI Taxonomy" id="3702"/>
    <lineage>
        <taxon>Eukaryota</taxon>
        <taxon>Viridiplantae</taxon>
        <taxon>Streptophyta</taxon>
        <taxon>Embryophyta</taxon>
        <taxon>Tracheophyta</taxon>
        <taxon>Spermatophyta</taxon>
        <taxon>Magnoliopsida</taxon>
        <taxon>eudicotyledons</taxon>
        <taxon>Gunneridae</taxon>
        <taxon>Pentapetalae</taxon>
        <taxon>rosids</taxon>
        <taxon>malvids</taxon>
        <taxon>Brassicales</taxon>
        <taxon>Brassicaceae</taxon>
        <taxon>Camelineae</taxon>
        <taxon>Arabidopsis</taxon>
    </lineage>
</organism>
<dbReference type="EC" id="1.1.1.22" evidence="2"/>
<dbReference type="EMBL" id="AL391143">
    <property type="protein sequence ID" value="CAC01748.1"/>
    <property type="molecule type" value="Genomic_DNA"/>
</dbReference>
<dbReference type="EMBL" id="CP002688">
    <property type="protein sequence ID" value="AED92167.1"/>
    <property type="molecule type" value="Genomic_DNA"/>
</dbReference>
<dbReference type="EMBL" id="AY056200">
    <property type="protein sequence ID" value="AAL07049.1"/>
    <property type="molecule type" value="mRNA"/>
</dbReference>
<dbReference type="EMBL" id="BT015794">
    <property type="protein sequence ID" value="AAU90084.1"/>
    <property type="molecule type" value="mRNA"/>
</dbReference>
<dbReference type="PIR" id="T51527">
    <property type="entry name" value="T51527"/>
</dbReference>
<dbReference type="RefSeq" id="NP_197053.1">
    <property type="nucleotide sequence ID" value="NM_121553.4"/>
</dbReference>
<dbReference type="SMR" id="Q9LF33"/>
<dbReference type="BioGRID" id="16678">
    <property type="interactions" value="3"/>
</dbReference>
<dbReference type="FunCoup" id="Q9LF33">
    <property type="interactions" value="2677"/>
</dbReference>
<dbReference type="STRING" id="3702.Q9LF33"/>
<dbReference type="iPTMnet" id="Q9LF33"/>
<dbReference type="PaxDb" id="3702-AT5G15490.1"/>
<dbReference type="ProteomicsDB" id="233033"/>
<dbReference type="EnsemblPlants" id="AT5G15490.1">
    <property type="protein sequence ID" value="AT5G15490.1"/>
    <property type="gene ID" value="AT5G15490"/>
</dbReference>
<dbReference type="GeneID" id="831402"/>
<dbReference type="Gramene" id="AT5G15490.1">
    <property type="protein sequence ID" value="AT5G15490.1"/>
    <property type="gene ID" value="AT5G15490"/>
</dbReference>
<dbReference type="KEGG" id="ath:AT5G15490"/>
<dbReference type="Araport" id="AT5G15490"/>
<dbReference type="TAIR" id="AT5G15490">
    <property type="gene designation" value="UGD3"/>
</dbReference>
<dbReference type="eggNOG" id="KOG2666">
    <property type="taxonomic scope" value="Eukaryota"/>
</dbReference>
<dbReference type="HOGENOM" id="CLU_023810_7_0_1"/>
<dbReference type="InParanoid" id="Q9LF33"/>
<dbReference type="OMA" id="CFIAVGT"/>
<dbReference type="OrthoDB" id="1028176at2759"/>
<dbReference type="PhylomeDB" id="Q9LF33"/>
<dbReference type="BioCyc" id="ARA:AT5G15490-MONOMER"/>
<dbReference type="BRENDA" id="1.1.1.22">
    <property type="organism ID" value="399"/>
</dbReference>
<dbReference type="SABIO-RK" id="Q9LF33"/>
<dbReference type="UniPathway" id="UPA00038">
    <property type="reaction ID" value="UER00491"/>
</dbReference>
<dbReference type="CD-CODE" id="4299E36E">
    <property type="entry name" value="Nucleolus"/>
</dbReference>
<dbReference type="PRO" id="PR:Q9LF33"/>
<dbReference type="Proteomes" id="UP000006548">
    <property type="component" value="Chromosome 5"/>
</dbReference>
<dbReference type="ExpressionAtlas" id="Q9LF33">
    <property type="expression patterns" value="baseline and differential"/>
</dbReference>
<dbReference type="GO" id="GO:0009505">
    <property type="term" value="C:plant-type cell wall"/>
    <property type="evidence" value="ECO:0007005"/>
    <property type="project" value="TAIR"/>
</dbReference>
<dbReference type="GO" id="GO:0051287">
    <property type="term" value="F:NAD binding"/>
    <property type="evidence" value="ECO:0007669"/>
    <property type="project" value="InterPro"/>
</dbReference>
<dbReference type="GO" id="GO:0003979">
    <property type="term" value="F:UDP-glucose 6-dehydrogenase activity"/>
    <property type="evidence" value="ECO:0000314"/>
    <property type="project" value="UniProtKB"/>
</dbReference>
<dbReference type="GO" id="GO:0005975">
    <property type="term" value="P:carbohydrate metabolic process"/>
    <property type="evidence" value="ECO:0000316"/>
    <property type="project" value="TAIR"/>
</dbReference>
<dbReference type="GO" id="GO:0052546">
    <property type="term" value="P:cell wall pectin metabolic process"/>
    <property type="evidence" value="ECO:0000316"/>
    <property type="project" value="TAIR"/>
</dbReference>
<dbReference type="GO" id="GO:0006065">
    <property type="term" value="P:UDP-glucuronate biosynthetic process"/>
    <property type="evidence" value="ECO:0000314"/>
    <property type="project" value="UniProtKB"/>
</dbReference>
<dbReference type="FunFam" id="1.20.5.100:FF:000001">
    <property type="entry name" value="UDP-glucose 6-dehydrogenase"/>
    <property type="match status" value="1"/>
</dbReference>
<dbReference type="FunFam" id="3.40.50.720:FF:000032">
    <property type="entry name" value="UDP-glucose 6-dehydrogenase"/>
    <property type="match status" value="1"/>
</dbReference>
<dbReference type="FunFam" id="3.40.50.720:FF:000089">
    <property type="entry name" value="UDP-glucose 6-dehydrogenase"/>
    <property type="match status" value="1"/>
</dbReference>
<dbReference type="Gene3D" id="1.20.5.100">
    <property type="entry name" value="Cytochrome c1, transmembrane anchor, C-terminal"/>
    <property type="match status" value="1"/>
</dbReference>
<dbReference type="Gene3D" id="3.40.50.720">
    <property type="entry name" value="NAD(P)-binding Rossmann-like Domain"/>
    <property type="match status" value="2"/>
</dbReference>
<dbReference type="InterPro" id="IPR008927">
    <property type="entry name" value="6-PGluconate_DH-like_C_sf"/>
</dbReference>
<dbReference type="InterPro" id="IPR036291">
    <property type="entry name" value="NAD(P)-bd_dom_sf"/>
</dbReference>
<dbReference type="InterPro" id="IPR017476">
    <property type="entry name" value="UDP-Glc/GDP-Man"/>
</dbReference>
<dbReference type="InterPro" id="IPR014027">
    <property type="entry name" value="UDP-Glc/GDP-Man_DH_C"/>
</dbReference>
<dbReference type="InterPro" id="IPR036220">
    <property type="entry name" value="UDP-Glc/GDP-Man_DH_C_sf"/>
</dbReference>
<dbReference type="InterPro" id="IPR014026">
    <property type="entry name" value="UDP-Glc/GDP-Man_DH_dimer"/>
</dbReference>
<dbReference type="InterPro" id="IPR001732">
    <property type="entry name" value="UDP-Glc/GDP-Man_DH_N"/>
</dbReference>
<dbReference type="InterPro" id="IPR028356">
    <property type="entry name" value="UDPglc_DH_euk"/>
</dbReference>
<dbReference type="NCBIfam" id="TIGR03026">
    <property type="entry name" value="NDP-sugDHase"/>
    <property type="match status" value="1"/>
</dbReference>
<dbReference type="PANTHER" id="PTHR11374:SF60">
    <property type="entry name" value="UDP-GLUCOSE 6-DEHYDROGENASE 3"/>
    <property type="match status" value="1"/>
</dbReference>
<dbReference type="PANTHER" id="PTHR11374">
    <property type="entry name" value="UDP-GLUCOSE DEHYDROGENASE/UDP-MANNAC DEHYDROGENASE"/>
    <property type="match status" value="1"/>
</dbReference>
<dbReference type="Pfam" id="PF00984">
    <property type="entry name" value="UDPG_MGDP_dh"/>
    <property type="match status" value="1"/>
</dbReference>
<dbReference type="Pfam" id="PF03720">
    <property type="entry name" value="UDPG_MGDP_dh_C"/>
    <property type="match status" value="1"/>
</dbReference>
<dbReference type="Pfam" id="PF03721">
    <property type="entry name" value="UDPG_MGDP_dh_N"/>
    <property type="match status" value="1"/>
</dbReference>
<dbReference type="PIRSF" id="PIRSF500133">
    <property type="entry name" value="UDPglc_DH_euk"/>
    <property type="match status" value="1"/>
</dbReference>
<dbReference type="PIRSF" id="PIRSF000124">
    <property type="entry name" value="UDPglc_GDPman_dh"/>
    <property type="match status" value="1"/>
</dbReference>
<dbReference type="SMART" id="SM00984">
    <property type="entry name" value="UDPG_MGDP_dh_C"/>
    <property type="match status" value="1"/>
</dbReference>
<dbReference type="SUPFAM" id="SSF48179">
    <property type="entry name" value="6-phosphogluconate dehydrogenase C-terminal domain-like"/>
    <property type="match status" value="1"/>
</dbReference>
<dbReference type="SUPFAM" id="SSF51735">
    <property type="entry name" value="NAD(P)-binding Rossmann-fold domains"/>
    <property type="match status" value="1"/>
</dbReference>
<dbReference type="SUPFAM" id="SSF52413">
    <property type="entry name" value="UDP-glucose/GDP-mannose dehydrogenase C-terminal domain"/>
    <property type="match status" value="1"/>
</dbReference>
<comment type="function">
    <text evidence="2 3 4">Involved in the biosynthesis of UDP-glucuronic acid (UDP-GlcA), providing nucleotide sugars for cell-wall polymers. Required for the formation of cell wall ingrowths on the outer cell walls of nematode-induced syncytia.</text>
</comment>
<comment type="catalytic activity">
    <reaction evidence="2">
        <text>UDP-alpha-D-glucose + 2 NAD(+) + H2O = UDP-alpha-D-glucuronate + 2 NADH + 3 H(+)</text>
        <dbReference type="Rhea" id="RHEA:23596"/>
        <dbReference type="ChEBI" id="CHEBI:15377"/>
        <dbReference type="ChEBI" id="CHEBI:15378"/>
        <dbReference type="ChEBI" id="CHEBI:57540"/>
        <dbReference type="ChEBI" id="CHEBI:57945"/>
        <dbReference type="ChEBI" id="CHEBI:58052"/>
        <dbReference type="ChEBI" id="CHEBI:58885"/>
        <dbReference type="EC" id="1.1.1.22"/>
    </reaction>
    <physiologicalReaction direction="left-to-right" evidence="6">
        <dbReference type="Rhea" id="RHEA:23597"/>
    </physiologicalReaction>
</comment>
<comment type="activity regulation">
    <text evidence="2">Inhibited by UDP-xylose.</text>
</comment>
<comment type="biophysicochemical properties">
    <kinetics>
        <KM evidence="2">42 uM for NAD(+)</KM>
        <KM evidence="2">335 uM for UDP-glucose</KM>
    </kinetics>
</comment>
<comment type="pathway">
    <text>Nucleotide-sugar biosynthesis; UDP-alpha-D-glucuronate biosynthesis; UDP-alpha-D-glucuronate from UDP-alpha-D-glucose: step 1/1.</text>
</comment>
<comment type="developmental stage">
    <text evidence="2">Restricted expression to the primary root in young seedlings. Later detected in hypocotyl, leaves and flowers.</text>
</comment>
<comment type="disruption phenotype">
    <text evidence="3 4">No visible phenotype. Displays smaller nematode-induced syncytia. Ugd2 and ugd3 double mutant displays a strong dwarf phenotype and often develops seedlings with severe root defects; cell walls have an altered sugar composition (PubMed:21949134). Ugd2 and ugd3 double mutant displays abnormal nematode-induced syncytia (PubMed:22848518).</text>
</comment>
<comment type="similarity">
    <text evidence="5">Belongs to the UDP-glucose/GDP-mannose dehydrogenase family.</text>
</comment>
<keyword id="KW-0520">NAD</keyword>
<keyword id="KW-0560">Oxidoreductase</keyword>
<keyword id="KW-1185">Reference proteome</keyword>
<gene>
    <name type="primary">UGD3</name>
    <name type="ordered locus">At5g15490</name>
    <name type="ORF">T20K14_100</name>
</gene>
<protein>
    <recommendedName>
        <fullName>UDP-glucose 6-dehydrogenase 3</fullName>
        <shortName>UDP-Glc dehydrogenase 3</shortName>
        <shortName>UDP-GlcDH 3</shortName>
        <shortName>UDPGDH 3</shortName>
        <ecNumber evidence="2">1.1.1.22</ecNumber>
    </recommendedName>
    <alternativeName>
        <fullName>At-UGD3</fullName>
    </alternativeName>
</protein>
<reference key="1">
    <citation type="journal article" date="2000" name="Nature">
        <title>Sequence and analysis of chromosome 5 of the plant Arabidopsis thaliana.</title>
        <authorList>
            <person name="Tabata S."/>
            <person name="Kaneko T."/>
            <person name="Nakamura Y."/>
            <person name="Kotani H."/>
            <person name="Kato T."/>
            <person name="Asamizu E."/>
            <person name="Miyajima N."/>
            <person name="Sasamoto S."/>
            <person name="Kimura T."/>
            <person name="Hosouchi T."/>
            <person name="Kawashima K."/>
            <person name="Kohara M."/>
            <person name="Matsumoto M."/>
            <person name="Matsuno A."/>
            <person name="Muraki A."/>
            <person name="Nakayama S."/>
            <person name="Nakazaki N."/>
            <person name="Naruo K."/>
            <person name="Okumura S."/>
            <person name="Shinpo S."/>
            <person name="Takeuchi C."/>
            <person name="Wada T."/>
            <person name="Watanabe A."/>
            <person name="Yamada M."/>
            <person name="Yasuda M."/>
            <person name="Sato S."/>
            <person name="de la Bastide M."/>
            <person name="Huang E."/>
            <person name="Spiegel L."/>
            <person name="Gnoj L."/>
            <person name="O'Shaughnessy A."/>
            <person name="Preston R."/>
            <person name="Habermann K."/>
            <person name="Murray J."/>
            <person name="Johnson D."/>
            <person name="Rohlfing T."/>
            <person name="Nelson J."/>
            <person name="Stoneking T."/>
            <person name="Pepin K."/>
            <person name="Spieth J."/>
            <person name="Sekhon M."/>
            <person name="Armstrong J."/>
            <person name="Becker M."/>
            <person name="Belter E."/>
            <person name="Cordum H."/>
            <person name="Cordes M."/>
            <person name="Courtney L."/>
            <person name="Courtney W."/>
            <person name="Dante M."/>
            <person name="Du H."/>
            <person name="Edwards J."/>
            <person name="Fryman J."/>
            <person name="Haakensen B."/>
            <person name="Lamar E."/>
            <person name="Latreille P."/>
            <person name="Leonard S."/>
            <person name="Meyer R."/>
            <person name="Mulvaney E."/>
            <person name="Ozersky P."/>
            <person name="Riley A."/>
            <person name="Strowmatt C."/>
            <person name="Wagner-McPherson C."/>
            <person name="Wollam A."/>
            <person name="Yoakum M."/>
            <person name="Bell M."/>
            <person name="Dedhia N."/>
            <person name="Parnell L."/>
            <person name="Shah R."/>
            <person name="Rodriguez M."/>
            <person name="Hoon See L."/>
            <person name="Vil D."/>
            <person name="Baker J."/>
            <person name="Kirchoff K."/>
            <person name="Toth K."/>
            <person name="King L."/>
            <person name="Bahret A."/>
            <person name="Miller B."/>
            <person name="Marra M.A."/>
            <person name="Martienssen R."/>
            <person name="McCombie W.R."/>
            <person name="Wilson R.K."/>
            <person name="Murphy G."/>
            <person name="Bancroft I."/>
            <person name="Volckaert G."/>
            <person name="Wambutt R."/>
            <person name="Duesterhoeft A."/>
            <person name="Stiekema W."/>
            <person name="Pohl T."/>
            <person name="Entian K.-D."/>
            <person name="Terryn N."/>
            <person name="Hartley N."/>
            <person name="Bent E."/>
            <person name="Johnson S."/>
            <person name="Langham S.-A."/>
            <person name="McCullagh B."/>
            <person name="Robben J."/>
            <person name="Grymonprez B."/>
            <person name="Zimmermann W."/>
            <person name="Ramsperger U."/>
            <person name="Wedler H."/>
            <person name="Balke K."/>
            <person name="Wedler E."/>
            <person name="Peters S."/>
            <person name="van Staveren M."/>
            <person name="Dirkse W."/>
            <person name="Mooijman P."/>
            <person name="Klein Lankhorst R."/>
            <person name="Weitzenegger T."/>
            <person name="Bothe G."/>
            <person name="Rose M."/>
            <person name="Hauf J."/>
            <person name="Berneiser S."/>
            <person name="Hempel S."/>
            <person name="Feldpausch M."/>
            <person name="Lamberth S."/>
            <person name="Villarroel R."/>
            <person name="Gielen J."/>
            <person name="Ardiles W."/>
            <person name="Bents O."/>
            <person name="Lemcke K."/>
            <person name="Kolesov G."/>
            <person name="Mayer K.F.X."/>
            <person name="Rudd S."/>
            <person name="Schoof H."/>
            <person name="Schueller C."/>
            <person name="Zaccaria P."/>
            <person name="Mewes H.-W."/>
            <person name="Bevan M."/>
            <person name="Fransz P.F."/>
        </authorList>
    </citation>
    <scope>NUCLEOTIDE SEQUENCE [LARGE SCALE GENOMIC DNA]</scope>
    <source>
        <strain>cv. Columbia</strain>
    </source>
</reference>
<reference key="2">
    <citation type="journal article" date="2017" name="Plant J.">
        <title>Araport11: a complete reannotation of the Arabidopsis thaliana reference genome.</title>
        <authorList>
            <person name="Cheng C.Y."/>
            <person name="Krishnakumar V."/>
            <person name="Chan A.P."/>
            <person name="Thibaud-Nissen F."/>
            <person name="Schobel S."/>
            <person name="Town C.D."/>
        </authorList>
    </citation>
    <scope>GENOME REANNOTATION</scope>
    <source>
        <strain>cv. Columbia</strain>
    </source>
</reference>
<reference key="3">
    <citation type="journal article" date="2003" name="Science">
        <title>Empirical analysis of transcriptional activity in the Arabidopsis genome.</title>
        <authorList>
            <person name="Yamada K."/>
            <person name="Lim J."/>
            <person name="Dale J.M."/>
            <person name="Chen H."/>
            <person name="Shinn P."/>
            <person name="Palm C.J."/>
            <person name="Southwick A.M."/>
            <person name="Wu H.C."/>
            <person name="Kim C.J."/>
            <person name="Nguyen M."/>
            <person name="Pham P.K."/>
            <person name="Cheuk R.F."/>
            <person name="Karlin-Newmann G."/>
            <person name="Liu S.X."/>
            <person name="Lam B."/>
            <person name="Sakano H."/>
            <person name="Wu T."/>
            <person name="Yu G."/>
            <person name="Miranda M."/>
            <person name="Quach H.L."/>
            <person name="Tripp M."/>
            <person name="Chang C.H."/>
            <person name="Lee J.M."/>
            <person name="Toriumi M.J."/>
            <person name="Chan M.M."/>
            <person name="Tang C.C."/>
            <person name="Onodera C.S."/>
            <person name="Deng J.M."/>
            <person name="Akiyama K."/>
            <person name="Ansari Y."/>
            <person name="Arakawa T."/>
            <person name="Banh J."/>
            <person name="Banno F."/>
            <person name="Bowser L."/>
            <person name="Brooks S.Y."/>
            <person name="Carninci P."/>
            <person name="Chao Q."/>
            <person name="Choy N."/>
            <person name="Enju A."/>
            <person name="Goldsmith A.D."/>
            <person name="Gurjal M."/>
            <person name="Hansen N.F."/>
            <person name="Hayashizaki Y."/>
            <person name="Johnson-Hopson C."/>
            <person name="Hsuan V.W."/>
            <person name="Iida K."/>
            <person name="Karnes M."/>
            <person name="Khan S."/>
            <person name="Koesema E."/>
            <person name="Ishida J."/>
            <person name="Jiang P.X."/>
            <person name="Jones T."/>
            <person name="Kawai J."/>
            <person name="Kamiya A."/>
            <person name="Meyers C."/>
            <person name="Nakajima M."/>
            <person name="Narusaka M."/>
            <person name="Seki M."/>
            <person name="Sakurai T."/>
            <person name="Satou M."/>
            <person name="Tamse R."/>
            <person name="Vaysberg M."/>
            <person name="Wallender E.K."/>
            <person name="Wong C."/>
            <person name="Yamamura Y."/>
            <person name="Yuan S."/>
            <person name="Shinozaki K."/>
            <person name="Davis R.W."/>
            <person name="Theologis A."/>
            <person name="Ecker J.R."/>
        </authorList>
    </citation>
    <scope>NUCLEOTIDE SEQUENCE [LARGE SCALE MRNA]</scope>
    <source>
        <strain>cv. Columbia</strain>
    </source>
</reference>
<reference key="4">
    <citation type="submission" date="2004-10" db="EMBL/GenBank/DDBJ databases">
        <title>Arabidopsis ORF clones.</title>
        <authorList>
            <person name="Shinn P."/>
            <person name="Chen H."/>
            <person name="Cheuk R.F."/>
            <person name="Kim C.J."/>
            <person name="Ecker J.R."/>
        </authorList>
    </citation>
    <scope>NUCLEOTIDE SEQUENCE [LARGE SCALE MRNA]</scope>
    <source>
        <strain>cv. Columbia</strain>
    </source>
</reference>
<reference key="5">
    <citation type="journal article" date="2001" name="Plant Mol. Biol.">
        <title>Molecular genetics of nucleotide sugar interconversion pathways in plants.</title>
        <authorList>
            <person name="Reiter W.-D."/>
            <person name="Vanzin G.F."/>
        </authorList>
    </citation>
    <scope>GENE FAMILY</scope>
</reference>
<reference key="6">
    <citation type="journal article" date="2004" name="Curr. Opin. Plant Biol.">
        <title>Nucleotide sugar interconversions and cell wall biosynthesis: how to bring the inside to the outside.</title>
        <authorList>
            <person name="Seifert G.J."/>
        </authorList>
    </citation>
    <scope>REVIEW</scope>
</reference>
<reference key="7">
    <citation type="journal article" date="2007" name="J. Exp. Bot.">
        <title>Genome-wide analysis of the UDP-glucose dehydrogenase gene family in Arabidopsis, a key enzyme for matrix polysaccharides in cell walls.</title>
        <authorList>
            <person name="Klinghammer M."/>
            <person name="Tenhaken R."/>
        </authorList>
    </citation>
    <scope>GENE FAMILY</scope>
    <scope>NOMENCLATURE</scope>
    <scope>FUNCTION</scope>
    <scope>CATALYTIC ACTIVITY</scope>
    <scope>BIOPHYSICOCHEMICAL PROPERTIES</scope>
    <scope>ACTIVITY REGULATION</scope>
    <scope>DEVELOPMENTAL STAGE</scope>
</reference>
<reference key="8">
    <citation type="journal article" date="2011" name="J. Biol. Chem.">
        <title>Down-regulation of UDP-glucuronic acid biosynthesis leads to swollen plant cell walls and severe developmental defects associated with changes in pectic polysaccharides.</title>
        <authorList>
            <person name="Reboul R."/>
            <person name="Geserick C."/>
            <person name="Pabst M."/>
            <person name="Frey B."/>
            <person name="Wittmann D."/>
            <person name="Luetz-Meindl U."/>
            <person name="Leonard R."/>
            <person name="Tenhaken R."/>
        </authorList>
    </citation>
    <scope>DISRUPTION PHENOTYPE</scope>
    <scope>FUNCTION</scope>
</reference>
<reference key="9">
    <citation type="journal article" date="2012" name="PLoS ONE">
        <title>Cell wall ingrowths in nematode induced syncytia require UGD2 and UGD3.</title>
        <authorList>
            <person name="Siddique S."/>
            <person name="Sobczak M."/>
            <person name="Tenhaken R."/>
            <person name="Grundler F.M."/>
            <person name="Bohlmann H."/>
        </authorList>
    </citation>
    <scope>DISRUPTION PHENOTYPE</scope>
    <scope>FUNCTION</scope>
</reference>
<feature type="chain" id="PRO_0000422268" description="UDP-glucose 6-dehydrogenase 3">
    <location>
        <begin position="1"/>
        <end position="480"/>
    </location>
</feature>
<feature type="active site" description="Nucleophile" evidence="1">
    <location>
        <position position="272"/>
    </location>
</feature>
<feature type="binding site" evidence="1">
    <location>
        <begin position="8"/>
        <end position="13"/>
    </location>
    <ligand>
        <name>NAD(+)</name>
        <dbReference type="ChEBI" id="CHEBI:57540"/>
    </ligand>
</feature>
<feature type="binding site" evidence="1">
    <location>
        <position position="33"/>
    </location>
    <ligand>
        <name>NAD(+)</name>
        <dbReference type="ChEBI" id="CHEBI:57540"/>
    </ligand>
</feature>
<feature type="binding site" evidence="1">
    <location>
        <position position="38"/>
    </location>
    <ligand>
        <name>NAD(+)</name>
        <dbReference type="ChEBI" id="CHEBI:57540"/>
    </ligand>
</feature>
<feature type="binding site" evidence="1">
    <location>
        <begin position="86"/>
        <end position="90"/>
    </location>
    <ligand>
        <name>NAD(+)</name>
        <dbReference type="ChEBI" id="CHEBI:57540"/>
    </ligand>
</feature>
<feature type="binding site" evidence="1">
    <location>
        <begin position="127"/>
        <end position="128"/>
    </location>
    <ligand>
        <name>NAD(+)</name>
        <dbReference type="ChEBI" id="CHEBI:57540"/>
    </ligand>
</feature>
<feature type="binding site" evidence="1">
    <location>
        <begin position="157"/>
        <end position="161"/>
    </location>
    <ligand>
        <name>substrate</name>
    </ligand>
</feature>
<feature type="binding site" evidence="1">
    <location>
        <position position="161"/>
    </location>
    <ligand>
        <name>NAD(+)</name>
        <dbReference type="ChEBI" id="CHEBI:57540"/>
    </ligand>
</feature>
<feature type="binding site" evidence="1">
    <location>
        <begin position="216"/>
        <end position="223"/>
    </location>
    <ligand>
        <name>substrate</name>
    </ligand>
</feature>
<feature type="binding site" evidence="1">
    <location>
        <begin position="256"/>
        <end position="269"/>
    </location>
    <ligand>
        <name>substrate</name>
    </ligand>
</feature>
<feature type="binding site" evidence="1">
    <location>
        <begin position="272"/>
        <end position="275"/>
    </location>
    <ligand>
        <name>NAD(+)</name>
        <dbReference type="ChEBI" id="CHEBI:57540"/>
    </ligand>
</feature>
<feature type="binding site" evidence="1">
    <location>
        <begin position="334"/>
        <end position="335"/>
    </location>
    <ligand>
        <name>substrate</name>
    </ligand>
</feature>
<feature type="binding site" evidence="1">
    <location>
        <position position="342"/>
    </location>
    <ligand>
        <name>NAD(+)</name>
        <dbReference type="ChEBI" id="CHEBI:57540"/>
    </ligand>
</feature>
<feature type="binding site" evidence="1">
    <location>
        <position position="447"/>
    </location>
    <ligand>
        <name>substrate</name>
    </ligand>
</feature>
<evidence type="ECO:0000250" key="1"/>
<evidence type="ECO:0000269" key="2">
    <source>
    </source>
</evidence>
<evidence type="ECO:0000269" key="3">
    <source>
    </source>
</evidence>
<evidence type="ECO:0000269" key="4">
    <source>
    </source>
</evidence>
<evidence type="ECO:0000305" key="5"/>
<evidence type="ECO:0000305" key="6">
    <source>
    </source>
</evidence>
<proteinExistence type="evidence at protein level"/>